<organism>
    <name type="scientific">Mus musculus</name>
    <name type="common">Mouse</name>
    <dbReference type="NCBI Taxonomy" id="10090"/>
    <lineage>
        <taxon>Eukaryota</taxon>
        <taxon>Metazoa</taxon>
        <taxon>Chordata</taxon>
        <taxon>Craniata</taxon>
        <taxon>Vertebrata</taxon>
        <taxon>Euteleostomi</taxon>
        <taxon>Mammalia</taxon>
        <taxon>Eutheria</taxon>
        <taxon>Euarchontoglires</taxon>
        <taxon>Glires</taxon>
        <taxon>Rodentia</taxon>
        <taxon>Myomorpha</taxon>
        <taxon>Muroidea</taxon>
        <taxon>Muridae</taxon>
        <taxon>Murinae</taxon>
        <taxon>Mus</taxon>
        <taxon>Mus</taxon>
    </lineage>
</organism>
<evidence type="ECO:0000255" key="1"/>
<evidence type="ECO:0000303" key="2">
    <source>
    </source>
</evidence>
<evidence type="ECO:0000305" key="3"/>
<reference key="1">
    <citation type="journal article" date="2005" name="Science">
        <title>The transcriptional landscape of the mammalian genome.</title>
        <authorList>
            <person name="Carninci P."/>
            <person name="Kasukawa T."/>
            <person name="Katayama S."/>
            <person name="Gough J."/>
            <person name="Frith M.C."/>
            <person name="Maeda N."/>
            <person name="Oyama R."/>
            <person name="Ravasi T."/>
            <person name="Lenhard B."/>
            <person name="Wells C."/>
            <person name="Kodzius R."/>
            <person name="Shimokawa K."/>
            <person name="Bajic V.B."/>
            <person name="Brenner S.E."/>
            <person name="Batalov S."/>
            <person name="Forrest A.R."/>
            <person name="Zavolan M."/>
            <person name="Davis M.J."/>
            <person name="Wilming L.G."/>
            <person name="Aidinis V."/>
            <person name="Allen J.E."/>
            <person name="Ambesi-Impiombato A."/>
            <person name="Apweiler R."/>
            <person name="Aturaliya R.N."/>
            <person name="Bailey T.L."/>
            <person name="Bansal M."/>
            <person name="Baxter L."/>
            <person name="Beisel K.W."/>
            <person name="Bersano T."/>
            <person name="Bono H."/>
            <person name="Chalk A.M."/>
            <person name="Chiu K.P."/>
            <person name="Choudhary V."/>
            <person name="Christoffels A."/>
            <person name="Clutterbuck D.R."/>
            <person name="Crowe M.L."/>
            <person name="Dalla E."/>
            <person name="Dalrymple B.P."/>
            <person name="de Bono B."/>
            <person name="Della Gatta G."/>
            <person name="di Bernardo D."/>
            <person name="Down T."/>
            <person name="Engstrom P."/>
            <person name="Fagiolini M."/>
            <person name="Faulkner G."/>
            <person name="Fletcher C.F."/>
            <person name="Fukushima T."/>
            <person name="Furuno M."/>
            <person name="Futaki S."/>
            <person name="Gariboldi M."/>
            <person name="Georgii-Hemming P."/>
            <person name="Gingeras T.R."/>
            <person name="Gojobori T."/>
            <person name="Green R.E."/>
            <person name="Gustincich S."/>
            <person name="Harbers M."/>
            <person name="Hayashi Y."/>
            <person name="Hensch T.K."/>
            <person name="Hirokawa N."/>
            <person name="Hill D."/>
            <person name="Huminiecki L."/>
            <person name="Iacono M."/>
            <person name="Ikeo K."/>
            <person name="Iwama A."/>
            <person name="Ishikawa T."/>
            <person name="Jakt M."/>
            <person name="Kanapin A."/>
            <person name="Katoh M."/>
            <person name="Kawasawa Y."/>
            <person name="Kelso J."/>
            <person name="Kitamura H."/>
            <person name="Kitano H."/>
            <person name="Kollias G."/>
            <person name="Krishnan S.P."/>
            <person name="Kruger A."/>
            <person name="Kummerfeld S.K."/>
            <person name="Kurochkin I.V."/>
            <person name="Lareau L.F."/>
            <person name="Lazarevic D."/>
            <person name="Lipovich L."/>
            <person name="Liu J."/>
            <person name="Liuni S."/>
            <person name="McWilliam S."/>
            <person name="Madan Babu M."/>
            <person name="Madera M."/>
            <person name="Marchionni L."/>
            <person name="Matsuda H."/>
            <person name="Matsuzawa S."/>
            <person name="Miki H."/>
            <person name="Mignone F."/>
            <person name="Miyake S."/>
            <person name="Morris K."/>
            <person name="Mottagui-Tabar S."/>
            <person name="Mulder N."/>
            <person name="Nakano N."/>
            <person name="Nakauchi H."/>
            <person name="Ng P."/>
            <person name="Nilsson R."/>
            <person name="Nishiguchi S."/>
            <person name="Nishikawa S."/>
            <person name="Nori F."/>
            <person name="Ohara O."/>
            <person name="Okazaki Y."/>
            <person name="Orlando V."/>
            <person name="Pang K.C."/>
            <person name="Pavan W.J."/>
            <person name="Pavesi G."/>
            <person name="Pesole G."/>
            <person name="Petrovsky N."/>
            <person name="Piazza S."/>
            <person name="Reed J."/>
            <person name="Reid J.F."/>
            <person name="Ring B.Z."/>
            <person name="Ringwald M."/>
            <person name="Rost B."/>
            <person name="Ruan Y."/>
            <person name="Salzberg S.L."/>
            <person name="Sandelin A."/>
            <person name="Schneider C."/>
            <person name="Schoenbach C."/>
            <person name="Sekiguchi K."/>
            <person name="Semple C.A."/>
            <person name="Seno S."/>
            <person name="Sessa L."/>
            <person name="Sheng Y."/>
            <person name="Shibata Y."/>
            <person name="Shimada H."/>
            <person name="Shimada K."/>
            <person name="Silva D."/>
            <person name="Sinclair B."/>
            <person name="Sperling S."/>
            <person name="Stupka E."/>
            <person name="Sugiura K."/>
            <person name="Sultana R."/>
            <person name="Takenaka Y."/>
            <person name="Taki K."/>
            <person name="Tammoja K."/>
            <person name="Tan S.L."/>
            <person name="Tang S."/>
            <person name="Taylor M.S."/>
            <person name="Tegner J."/>
            <person name="Teichmann S.A."/>
            <person name="Ueda H.R."/>
            <person name="van Nimwegen E."/>
            <person name="Verardo R."/>
            <person name="Wei C.L."/>
            <person name="Yagi K."/>
            <person name="Yamanishi H."/>
            <person name="Zabarovsky E."/>
            <person name="Zhu S."/>
            <person name="Zimmer A."/>
            <person name="Hide W."/>
            <person name="Bult C."/>
            <person name="Grimmond S.M."/>
            <person name="Teasdale R.D."/>
            <person name="Liu E.T."/>
            <person name="Brusic V."/>
            <person name="Quackenbush J."/>
            <person name="Wahlestedt C."/>
            <person name="Mattick J.S."/>
            <person name="Hume D.A."/>
            <person name="Kai C."/>
            <person name="Sasaki D."/>
            <person name="Tomaru Y."/>
            <person name="Fukuda S."/>
            <person name="Kanamori-Katayama M."/>
            <person name="Suzuki M."/>
            <person name="Aoki J."/>
            <person name="Arakawa T."/>
            <person name="Iida J."/>
            <person name="Imamura K."/>
            <person name="Itoh M."/>
            <person name="Kato T."/>
            <person name="Kawaji H."/>
            <person name="Kawagashira N."/>
            <person name="Kawashima T."/>
            <person name="Kojima M."/>
            <person name="Kondo S."/>
            <person name="Konno H."/>
            <person name="Nakano K."/>
            <person name="Ninomiya N."/>
            <person name="Nishio T."/>
            <person name="Okada M."/>
            <person name="Plessy C."/>
            <person name="Shibata K."/>
            <person name="Shiraki T."/>
            <person name="Suzuki S."/>
            <person name="Tagami M."/>
            <person name="Waki K."/>
            <person name="Watahiki A."/>
            <person name="Okamura-Oho Y."/>
            <person name="Suzuki H."/>
            <person name="Kawai J."/>
            <person name="Hayashizaki Y."/>
        </authorList>
    </citation>
    <scope>NUCLEOTIDE SEQUENCE [LARGE SCALE MRNA] (ISOFORMS 1 AND 2)</scope>
    <source>
        <strain>C57BL/6J</strain>
        <tissue>Head</tissue>
        <tissue>Testis</tissue>
    </source>
</reference>
<reference key="2">
    <citation type="journal article" date="2004" name="Genome Res.">
        <title>The status, quality, and expansion of the NIH full-length cDNA project: the Mammalian Gene Collection (MGC).</title>
        <authorList>
            <consortium name="The MGC Project Team"/>
        </authorList>
    </citation>
    <scope>NUCLEOTIDE SEQUENCE [LARGE SCALE MRNA] (ISOFORM 1)</scope>
    <source>
        <strain>FVB/N</strain>
        <tissue>Kidney</tissue>
    </source>
</reference>
<reference key="3">
    <citation type="journal article" date="2010" name="Cell">
        <title>A tissue-specific atlas of mouse protein phosphorylation and expression.</title>
        <authorList>
            <person name="Huttlin E.L."/>
            <person name="Jedrychowski M.P."/>
            <person name="Elias J.E."/>
            <person name="Goswami T."/>
            <person name="Rad R."/>
            <person name="Beausoleil S.A."/>
            <person name="Villen J."/>
            <person name="Haas W."/>
            <person name="Sowa M.E."/>
            <person name="Gygi S.P."/>
        </authorList>
    </citation>
    <scope>IDENTIFICATION BY MASS SPECTROMETRY [LARGE SCALE ANALYSIS]</scope>
    <source>
        <tissue>Kidney</tissue>
        <tissue>Testis</tissue>
    </source>
</reference>
<protein>
    <recommendedName>
        <fullName>Beta-galactosidase-1-like protein</fullName>
        <ecNumber>3.2.1.-</ecNumber>
    </recommendedName>
</protein>
<name>GLB1L_MOUSE</name>
<accession>Q8VC60</accession>
<accession>Q8CDK6</accession>
<accession>Q9D631</accession>
<keyword id="KW-0025">Alternative splicing</keyword>
<keyword id="KW-0325">Glycoprotein</keyword>
<keyword id="KW-0326">Glycosidase</keyword>
<keyword id="KW-0378">Hydrolase</keyword>
<keyword id="KW-1185">Reference proteome</keyword>
<keyword id="KW-0964">Secreted</keyword>
<keyword id="KW-0732">Signal</keyword>
<comment type="function">
    <text evidence="3">Probable glycosyl hydrolase.</text>
</comment>
<comment type="subcellular location">
    <subcellularLocation>
        <location evidence="3">Secreted</location>
    </subcellularLocation>
</comment>
<comment type="alternative products">
    <event type="alternative splicing"/>
    <isoform>
        <id>Q8VC60-1</id>
        <name>1</name>
        <sequence type="displayed"/>
    </isoform>
    <isoform>
        <id>Q8VC60-2</id>
        <name>2</name>
        <sequence type="described" ref="VSP_030060 VSP_030061 VSP_030062"/>
    </isoform>
</comment>
<comment type="similarity">
    <text evidence="3">Belongs to the glycosyl hydrolase 35 family.</text>
</comment>
<dbReference type="EC" id="3.2.1.-"/>
<dbReference type="EMBL" id="AK014667">
    <property type="protein sequence ID" value="BAB29494.1"/>
    <property type="molecule type" value="mRNA"/>
</dbReference>
<dbReference type="EMBL" id="AK029925">
    <property type="protein sequence ID" value="BAC26681.1"/>
    <property type="molecule type" value="mRNA"/>
</dbReference>
<dbReference type="EMBL" id="BC021773">
    <property type="protein sequence ID" value="AAH21773.1"/>
    <property type="molecule type" value="mRNA"/>
</dbReference>
<dbReference type="CCDS" id="CCDS48291.1">
    <molecule id="Q8VC60-1"/>
</dbReference>
<dbReference type="RefSeq" id="NP_083286.1">
    <molecule id="Q8VC60-1"/>
    <property type="nucleotide sequence ID" value="NM_029010.2"/>
</dbReference>
<dbReference type="RefSeq" id="XP_006496616.1">
    <molecule id="Q8VC60-1"/>
    <property type="nucleotide sequence ID" value="XM_006496553.5"/>
</dbReference>
<dbReference type="RefSeq" id="XP_006496617.1">
    <molecule id="Q8VC60-1"/>
    <property type="nucleotide sequence ID" value="XM_006496554.5"/>
</dbReference>
<dbReference type="RefSeq" id="XP_017168026.1">
    <molecule id="Q8VC60-1"/>
    <property type="nucleotide sequence ID" value="XM_017312537.3"/>
</dbReference>
<dbReference type="SMR" id="Q8VC60"/>
<dbReference type="FunCoup" id="Q8VC60">
    <property type="interactions" value="252"/>
</dbReference>
<dbReference type="STRING" id="10090.ENSMUSP00000109253"/>
<dbReference type="CAZy" id="GH35">
    <property type="family name" value="Glycoside Hydrolase Family 35"/>
</dbReference>
<dbReference type="GlyCosmos" id="Q8VC60">
    <property type="glycosylation" value="2 sites, No reported glycans"/>
</dbReference>
<dbReference type="GlyGen" id="Q8VC60">
    <property type="glycosylation" value="3 sites, 2 N-linked glycans (2 sites)"/>
</dbReference>
<dbReference type="PhosphoSitePlus" id="Q8VC60"/>
<dbReference type="PaxDb" id="10090-ENSMUSP00000109253"/>
<dbReference type="PeptideAtlas" id="Q8VC60"/>
<dbReference type="ProteomicsDB" id="271225">
    <molecule id="Q8VC60-1"/>
</dbReference>
<dbReference type="ProteomicsDB" id="271226">
    <molecule id="Q8VC60-2"/>
</dbReference>
<dbReference type="Pumba" id="Q8VC60"/>
<dbReference type="Antibodypedia" id="34313">
    <property type="antibodies" value="65 antibodies from 13 providers"/>
</dbReference>
<dbReference type="Ensembl" id="ENSMUST00000113623.8">
    <molecule id="Q8VC60-1"/>
    <property type="protein sequence ID" value="ENSMUSP00000109253.2"/>
    <property type="gene ID" value="ENSMUSG00000026200.14"/>
</dbReference>
<dbReference type="Ensembl" id="ENSMUST00000155716.8">
    <molecule id="Q8VC60-1"/>
    <property type="protein sequence ID" value="ENSMUSP00000136285.2"/>
    <property type="gene ID" value="ENSMUSG00000026200.14"/>
</dbReference>
<dbReference type="GeneID" id="74577"/>
<dbReference type="KEGG" id="mmu:74577"/>
<dbReference type="UCSC" id="uc007bog.1">
    <molecule id="Q8VC60-2"/>
    <property type="organism name" value="mouse"/>
</dbReference>
<dbReference type="UCSC" id="uc011wnk.1">
    <molecule id="Q8VC60-1"/>
    <property type="organism name" value="mouse"/>
</dbReference>
<dbReference type="AGR" id="MGI:1921827"/>
<dbReference type="CTD" id="79411"/>
<dbReference type="MGI" id="MGI:1921827">
    <property type="gene designation" value="Glb1l"/>
</dbReference>
<dbReference type="VEuPathDB" id="HostDB:ENSMUSG00000026200"/>
<dbReference type="eggNOG" id="KOG0496">
    <property type="taxonomic scope" value="Eukaryota"/>
</dbReference>
<dbReference type="GeneTree" id="ENSGT00950000182942"/>
<dbReference type="HOGENOM" id="CLU_007853_7_2_1"/>
<dbReference type="InParanoid" id="Q8VC60"/>
<dbReference type="OMA" id="HERQYLH"/>
<dbReference type="OrthoDB" id="1657402at2759"/>
<dbReference type="PhylomeDB" id="Q8VC60"/>
<dbReference type="TreeFam" id="TF314816"/>
<dbReference type="Reactome" id="R-MMU-2022857">
    <property type="pathway name" value="Keratan sulfate degradation"/>
</dbReference>
<dbReference type="Reactome" id="R-MMU-2024096">
    <property type="pathway name" value="HS-GAG degradation"/>
</dbReference>
<dbReference type="Reactome" id="R-MMU-9840310">
    <property type="pathway name" value="Glycosphingolipid catabolism"/>
</dbReference>
<dbReference type="BioGRID-ORCS" id="74577">
    <property type="hits" value="3 hits in 77 CRISPR screens"/>
</dbReference>
<dbReference type="ChiTaRS" id="Glb1l">
    <property type="organism name" value="mouse"/>
</dbReference>
<dbReference type="PRO" id="PR:Q8VC60"/>
<dbReference type="Proteomes" id="UP000000589">
    <property type="component" value="Chromosome 1"/>
</dbReference>
<dbReference type="RNAct" id="Q8VC60">
    <property type="molecule type" value="protein"/>
</dbReference>
<dbReference type="Bgee" id="ENSMUSG00000026200">
    <property type="expression patterns" value="Expressed in spermatocyte and 145 other cell types or tissues"/>
</dbReference>
<dbReference type="ExpressionAtlas" id="Q8VC60">
    <property type="expression patterns" value="baseline and differential"/>
</dbReference>
<dbReference type="GO" id="GO:0005615">
    <property type="term" value="C:extracellular space"/>
    <property type="evidence" value="ECO:0007005"/>
    <property type="project" value="BHF-UCL"/>
</dbReference>
<dbReference type="GO" id="GO:0004565">
    <property type="term" value="F:beta-galactosidase activity"/>
    <property type="evidence" value="ECO:0007669"/>
    <property type="project" value="InterPro"/>
</dbReference>
<dbReference type="GO" id="GO:0005975">
    <property type="term" value="P:carbohydrate metabolic process"/>
    <property type="evidence" value="ECO:0007669"/>
    <property type="project" value="InterPro"/>
</dbReference>
<dbReference type="FunFam" id="2.60.120.260:FF:000021">
    <property type="entry name" value="Beta-galactosidase"/>
    <property type="match status" value="1"/>
</dbReference>
<dbReference type="FunFam" id="3.20.20.80:FF:000017">
    <property type="entry name" value="Beta-galactosidase"/>
    <property type="match status" value="1"/>
</dbReference>
<dbReference type="Gene3D" id="2.60.120.260">
    <property type="entry name" value="Galactose-binding domain-like"/>
    <property type="match status" value="2"/>
</dbReference>
<dbReference type="Gene3D" id="3.20.20.80">
    <property type="entry name" value="Glycosidases"/>
    <property type="match status" value="1"/>
</dbReference>
<dbReference type="InterPro" id="IPR026283">
    <property type="entry name" value="B-gal_1-like"/>
</dbReference>
<dbReference type="InterPro" id="IPR048912">
    <property type="entry name" value="BetaGal1-like_ABD1"/>
</dbReference>
<dbReference type="InterPro" id="IPR048913">
    <property type="entry name" value="BetaGal_gal-bd"/>
</dbReference>
<dbReference type="InterPro" id="IPR008979">
    <property type="entry name" value="Galactose-bd-like_sf"/>
</dbReference>
<dbReference type="InterPro" id="IPR031330">
    <property type="entry name" value="Gly_Hdrlase_35_cat"/>
</dbReference>
<dbReference type="InterPro" id="IPR001944">
    <property type="entry name" value="Glycoside_Hdrlase_35"/>
</dbReference>
<dbReference type="InterPro" id="IPR017853">
    <property type="entry name" value="Glycoside_hydrolase_SF"/>
</dbReference>
<dbReference type="PANTHER" id="PTHR23421">
    <property type="entry name" value="BETA-GALACTOSIDASE RELATED"/>
    <property type="match status" value="1"/>
</dbReference>
<dbReference type="Pfam" id="PF21317">
    <property type="entry name" value="BetaGal_ABD_1"/>
    <property type="match status" value="1"/>
</dbReference>
<dbReference type="Pfam" id="PF21467">
    <property type="entry name" value="BetaGal_gal-bd"/>
    <property type="match status" value="1"/>
</dbReference>
<dbReference type="Pfam" id="PF01301">
    <property type="entry name" value="Glyco_hydro_35"/>
    <property type="match status" value="1"/>
</dbReference>
<dbReference type="PIRSF" id="PIRSF006336">
    <property type="entry name" value="B-gal"/>
    <property type="match status" value="1"/>
</dbReference>
<dbReference type="PRINTS" id="PR00742">
    <property type="entry name" value="GLHYDRLASE35"/>
</dbReference>
<dbReference type="SUPFAM" id="SSF51445">
    <property type="entry name" value="(Trans)glycosidases"/>
    <property type="match status" value="1"/>
</dbReference>
<dbReference type="SUPFAM" id="SSF49785">
    <property type="entry name" value="Galactose-binding domain-like"/>
    <property type="match status" value="1"/>
</dbReference>
<sequence>MPPDLPSLLLRLVVLLLLSQAEARSFVVDREHDRFLLDGVPFRYVSGSLHYFRVPPVLWADRLLKMQLSGLNAVQFYVPWNYHEPEPGIYNFNGSRDLIAFLNEAAKVNLLVILRPGPYICAEWEMGGLPSWLLRNPNIHLRTSDPAFLEAVDSWFKVLLPKIYPFLYHNGGNIISIQVENEYGSYKACDFKYMRHLAGLFRALLGDKILLFTTDGPHGLRCGSLQGLYTTIDFGPADNVTRIFSLLREYEPHGPLVNSEYYTGWLDYWGQNHSTRSSPAVAQGLEKMLKLGASVNMYMFHGGTNFGYWNGADEKGRFLPITTSYDYDAPISEAGDPTPKLFAIRNVISKFQEIPLGPLPPPSPKMKFGPLTMSLDGNLLSFLDFLCPQGPIHSVLPLTFEAVKLDHGFMLYRTYLTSPVLEPTPFWVPNNGIHDRAYVMVDGVLKGVLERSLKQELYLTGTVGTRLDILLENMGRLSFGSNHSDFKGLLEAPLLGQTILTEWMMFPLKVDKLVKWWFPLQLMKRALPQASSVPAFYSAKFPVFGLLGDTFLYLPGWTKGQVWINGFNLGRYWTMRGPQQTLYVPRLLLFGRSINKITLLELENVPHNPQVQFLDKPILNSTLHWGYNFLLSETQGSFEPMELSGH</sequence>
<feature type="signal peptide" evidence="1">
    <location>
        <begin position="1"/>
        <end position="23"/>
    </location>
</feature>
<feature type="chain" id="PRO_0000313606" description="Beta-galactosidase-1-like protein">
    <location>
        <begin position="24"/>
        <end position="646"/>
    </location>
</feature>
<feature type="active site" description="Proton donor" evidence="1">
    <location>
        <position position="182"/>
    </location>
</feature>
<feature type="active site" description="Nucleophile" evidence="1">
    <location>
        <position position="260"/>
    </location>
</feature>
<feature type="glycosylation site" description="N-linked (GlcNAc...) asparagine" evidence="1">
    <location>
        <position position="93"/>
    </location>
</feature>
<feature type="glycosylation site" description="N-linked (GlcNAc...) asparagine" evidence="1">
    <location>
        <position position="239"/>
    </location>
</feature>
<feature type="splice variant" id="VSP_030060" description="In isoform 2." evidence="2">
    <original>MPPDLPSLLLRLVVLLLLSQAEARSFVVDREHDRFLLDGVPFRYVSGSLHYFRVPPVLWADRLLKMQLSGLNAVQF</original>
    <variation>MAQNLFLAASLQVLSLLGNLWVLLTSSFLS</variation>
    <location>
        <begin position="1"/>
        <end position="76"/>
    </location>
</feature>
<feature type="splice variant" id="VSP_030061" description="In isoform 2." evidence="2">
    <original>GQVWINGFNLGRYW</original>
    <variation>VLLTVVEGIVGGTL</variation>
    <location>
        <begin position="560"/>
        <end position="573"/>
    </location>
</feature>
<feature type="splice variant" id="VSP_030062" description="In isoform 2." evidence="2">
    <location>
        <begin position="574"/>
        <end position="646"/>
    </location>
</feature>
<feature type="sequence conflict" description="In Ref. 1; BAC26681." evidence="3" ref="1">
    <original>R</original>
    <variation>S</variation>
    <location>
        <position position="466"/>
    </location>
</feature>
<proteinExistence type="evidence at protein level"/>
<gene>
    <name type="primary">Glb1l</name>
</gene>